<reference key="1">
    <citation type="journal article" date="2009" name="J. Bacteriol.">
        <title>Complete genome sequence of Haemophilus parasuis SH0165.</title>
        <authorList>
            <person name="Yue M."/>
            <person name="Yang F."/>
            <person name="Yang J."/>
            <person name="Bei W."/>
            <person name="Cai X."/>
            <person name="Chen L."/>
            <person name="Dong J."/>
            <person name="Zhou R."/>
            <person name="Jin M."/>
            <person name="Jin Q."/>
            <person name="Chen H."/>
        </authorList>
    </citation>
    <scope>NUCLEOTIDE SEQUENCE [LARGE SCALE GENOMIC DNA]</scope>
    <source>
        <strain>SH0165</strain>
    </source>
</reference>
<sequence length="117" mass="12878">MDKKVARIRRASRARHLMREQGATRLVVHRTPRHIYAQVIAPNGSEVLAAASTVEKVIKEQVKYTGNKEAAAVVGKIVAERALEKGIKAVAFDRSGFKYHGRVQSLADAAREAGLQF</sequence>
<feature type="chain" id="PRO_1000166233" description="Large ribosomal subunit protein uL18">
    <location>
        <begin position="1"/>
        <end position="117"/>
    </location>
</feature>
<name>RL18_GLAP5</name>
<gene>
    <name evidence="1" type="primary">rplR</name>
    <name type="ordered locus">HAPS_1438</name>
</gene>
<proteinExistence type="inferred from homology"/>
<organism>
    <name type="scientific">Glaesserella parasuis serovar 5 (strain SH0165)</name>
    <name type="common">Haemophilus parasuis</name>
    <dbReference type="NCBI Taxonomy" id="557723"/>
    <lineage>
        <taxon>Bacteria</taxon>
        <taxon>Pseudomonadati</taxon>
        <taxon>Pseudomonadota</taxon>
        <taxon>Gammaproteobacteria</taxon>
        <taxon>Pasteurellales</taxon>
        <taxon>Pasteurellaceae</taxon>
        <taxon>Glaesserella</taxon>
    </lineage>
</organism>
<protein>
    <recommendedName>
        <fullName evidence="1">Large ribosomal subunit protein uL18</fullName>
    </recommendedName>
    <alternativeName>
        <fullName evidence="2">50S ribosomal protein L18</fullName>
    </alternativeName>
</protein>
<keyword id="KW-1185">Reference proteome</keyword>
<keyword id="KW-0687">Ribonucleoprotein</keyword>
<keyword id="KW-0689">Ribosomal protein</keyword>
<keyword id="KW-0694">RNA-binding</keyword>
<keyword id="KW-0699">rRNA-binding</keyword>
<accession>B8F6Q5</accession>
<evidence type="ECO:0000255" key="1">
    <source>
        <dbReference type="HAMAP-Rule" id="MF_01337"/>
    </source>
</evidence>
<evidence type="ECO:0000305" key="2"/>
<comment type="function">
    <text evidence="1">This is one of the proteins that bind and probably mediate the attachment of the 5S RNA into the large ribosomal subunit, where it forms part of the central protuberance.</text>
</comment>
<comment type="subunit">
    <text evidence="1">Part of the 50S ribosomal subunit; part of the 5S rRNA/L5/L18/L25 subcomplex. Contacts the 5S and 23S rRNAs.</text>
</comment>
<comment type="similarity">
    <text evidence="1">Belongs to the universal ribosomal protein uL18 family.</text>
</comment>
<dbReference type="EMBL" id="CP001321">
    <property type="protein sequence ID" value="ACL33007.1"/>
    <property type="molecule type" value="Genomic_DNA"/>
</dbReference>
<dbReference type="RefSeq" id="WP_005711987.1">
    <property type="nucleotide sequence ID" value="NC_011852.1"/>
</dbReference>
<dbReference type="SMR" id="B8F6Q5"/>
<dbReference type="STRING" id="557723.HAPS_1438"/>
<dbReference type="GeneID" id="66617803"/>
<dbReference type="KEGG" id="hap:HAPS_1438"/>
<dbReference type="HOGENOM" id="CLU_098841_0_1_6"/>
<dbReference type="Proteomes" id="UP000006743">
    <property type="component" value="Chromosome"/>
</dbReference>
<dbReference type="GO" id="GO:0022625">
    <property type="term" value="C:cytosolic large ribosomal subunit"/>
    <property type="evidence" value="ECO:0007669"/>
    <property type="project" value="TreeGrafter"/>
</dbReference>
<dbReference type="GO" id="GO:0008097">
    <property type="term" value="F:5S rRNA binding"/>
    <property type="evidence" value="ECO:0007669"/>
    <property type="project" value="TreeGrafter"/>
</dbReference>
<dbReference type="GO" id="GO:0003735">
    <property type="term" value="F:structural constituent of ribosome"/>
    <property type="evidence" value="ECO:0007669"/>
    <property type="project" value="InterPro"/>
</dbReference>
<dbReference type="GO" id="GO:0006412">
    <property type="term" value="P:translation"/>
    <property type="evidence" value="ECO:0007669"/>
    <property type="project" value="UniProtKB-UniRule"/>
</dbReference>
<dbReference type="CDD" id="cd00432">
    <property type="entry name" value="Ribosomal_L18_L5e"/>
    <property type="match status" value="1"/>
</dbReference>
<dbReference type="FunFam" id="3.30.420.100:FF:000001">
    <property type="entry name" value="50S ribosomal protein L18"/>
    <property type="match status" value="1"/>
</dbReference>
<dbReference type="Gene3D" id="3.30.420.100">
    <property type="match status" value="1"/>
</dbReference>
<dbReference type="HAMAP" id="MF_01337_B">
    <property type="entry name" value="Ribosomal_uL18_B"/>
    <property type="match status" value="1"/>
</dbReference>
<dbReference type="InterPro" id="IPR004389">
    <property type="entry name" value="Ribosomal_uL18_bac-type"/>
</dbReference>
<dbReference type="InterPro" id="IPR005484">
    <property type="entry name" value="Ribosomal_uL18_bac/euk"/>
</dbReference>
<dbReference type="NCBIfam" id="TIGR00060">
    <property type="entry name" value="L18_bact"/>
    <property type="match status" value="1"/>
</dbReference>
<dbReference type="PANTHER" id="PTHR12899">
    <property type="entry name" value="39S RIBOSOMAL PROTEIN L18, MITOCHONDRIAL"/>
    <property type="match status" value="1"/>
</dbReference>
<dbReference type="PANTHER" id="PTHR12899:SF3">
    <property type="entry name" value="LARGE RIBOSOMAL SUBUNIT PROTEIN UL18M"/>
    <property type="match status" value="1"/>
</dbReference>
<dbReference type="Pfam" id="PF00861">
    <property type="entry name" value="Ribosomal_L18p"/>
    <property type="match status" value="1"/>
</dbReference>
<dbReference type="SUPFAM" id="SSF53137">
    <property type="entry name" value="Translational machinery components"/>
    <property type="match status" value="1"/>
</dbReference>